<accession>A0A0H3CCP8</accession>
<name>SOCA_CAUVN</name>
<comment type="function">
    <text evidence="1">Antitoxin component of an atypical type II toxin-antitoxin (TA) system. Unlike most type II TA systems, neutralizes the toxic activity of cognate toxin SocB by acting as an adapter to promote its degradation by ClpXP; degradation is dependent on the N-terminus of ClpX.</text>
</comment>
<comment type="subunit">
    <text evidence="1">Interacts with cognate toxin SocB and with ClpX.</text>
</comment>
<comment type="induction">
    <text evidence="1">Induced by DNA damaging agent mitomycin C, part of the socA-socB operon.</text>
</comment>
<comment type="disruption phenotype">
    <text evidence="1">Essential, it cannot be deleted unless the downstream gene for cognate toxin socB is also deleted. In depletion experiments the half-life of SocB is 19 minutes in the absence of SocA and about 2 minutes in its presence.</text>
</comment>
<dbReference type="EMBL" id="CP001340">
    <property type="protein sequence ID" value="ACL97095.1"/>
    <property type="molecule type" value="Genomic_DNA"/>
</dbReference>
<dbReference type="RefSeq" id="WP_010921344.1">
    <property type="nucleotide sequence ID" value="NC_011916.1"/>
</dbReference>
<dbReference type="RefSeq" id="YP_002519003.1">
    <property type="nucleotide sequence ID" value="NC_011916.1"/>
</dbReference>
<dbReference type="GeneID" id="7329715"/>
<dbReference type="KEGG" id="ccs:CCNA_03630"/>
<dbReference type="HOGENOM" id="CLU_110683_1_0_5"/>
<dbReference type="OrthoDB" id="9799173at2"/>
<dbReference type="Proteomes" id="UP000001364">
    <property type="component" value="Chromosome"/>
</dbReference>
<dbReference type="InterPro" id="IPR025272">
    <property type="entry name" value="SocA_Panacea"/>
</dbReference>
<dbReference type="NCBIfam" id="NF047745">
    <property type="entry name" value="SocA_antitoxin"/>
    <property type="match status" value="1"/>
</dbReference>
<dbReference type="Pfam" id="PF13274">
    <property type="entry name" value="SocA_Panacea"/>
    <property type="match status" value="1"/>
</dbReference>
<keyword id="KW-1185">Reference proteome</keyword>
<keyword id="KW-1277">Toxin-antitoxin system</keyword>
<evidence type="ECO:0000269" key="1">
    <source>
    </source>
</evidence>
<evidence type="ECO:0000303" key="2">
    <source>
    </source>
</evidence>
<evidence type="ECO:0000305" key="3"/>
<proteinExistence type="evidence at protein level"/>
<protein>
    <recommendedName>
        <fullName evidence="2">Antitoxin SocA</fullName>
    </recommendedName>
    <alternativeName>
        <fullName evidence="3">Adapter protein SocA</fullName>
    </alternativeName>
</protein>
<sequence length="188" mass="20424">MPPLTQDPQSVDARAVANLLLDKAAALDIPISNLALQKLLYFAHGRFLVDKGRPLVNGFFEAWKFGPVHPVVYRCFSANGPKYIINRAIKKDILSGLHIIVSPPRDQDIHEGIERVLLTMGRMSASQLVAVSHASGGPWDVIANGPGTNLGLGLRICDKVIKDRFRFQKVSVSVPPGLGDTLEEAPPS</sequence>
<organism>
    <name type="scientific">Caulobacter vibrioides (strain NA1000 / CB15N)</name>
    <name type="common">Caulobacter crescentus</name>
    <dbReference type="NCBI Taxonomy" id="565050"/>
    <lineage>
        <taxon>Bacteria</taxon>
        <taxon>Pseudomonadati</taxon>
        <taxon>Pseudomonadota</taxon>
        <taxon>Alphaproteobacteria</taxon>
        <taxon>Caulobacterales</taxon>
        <taxon>Caulobacteraceae</taxon>
        <taxon>Caulobacter</taxon>
    </lineage>
</organism>
<gene>
    <name evidence="2" type="primary">socA</name>
    <name type="ordered locus">CCNA_03630</name>
</gene>
<reference key="1">
    <citation type="journal article" date="2010" name="J. Bacteriol.">
        <title>The genetic basis of laboratory adaptation in Caulobacter crescentus.</title>
        <authorList>
            <person name="Marks M.E."/>
            <person name="Castro-Rojas C.M."/>
            <person name="Teiling C."/>
            <person name="Du L."/>
            <person name="Kapatral V."/>
            <person name="Walunas T.L."/>
            <person name="Crosson S."/>
        </authorList>
    </citation>
    <scope>NUCLEOTIDE SEQUENCE [LARGE SCALE GENOMIC DNA]</scope>
    <source>
        <strain>NA1000 / CB15N</strain>
    </source>
</reference>
<reference key="2">
    <citation type="journal article" date="2013" name="Mol. Cell">
        <title>A bacterial toxin inhibits DNA replication elongation through a direct interaction with the beta sliding clamp.</title>
        <authorList>
            <person name="Aakre C.D."/>
            <person name="Phung T.N."/>
            <person name="Huang D."/>
            <person name="Laub M.T."/>
        </authorList>
    </citation>
    <scope>FUNCTION AS AN ANTITOXIN</scope>
    <scope>INTERACTION WITH SOCB AND CLPX</scope>
    <scope>INDUCTION</scope>
    <scope>DISRUPTION PHENOTYPE</scope>
</reference>
<feature type="chain" id="PRO_0000441112" description="Antitoxin SocA">
    <location>
        <begin position="1"/>
        <end position="188"/>
    </location>
</feature>